<feature type="signal peptide" evidence="3">
    <location>
        <begin position="1"/>
        <end position="29"/>
    </location>
</feature>
<feature type="chain" id="PRO_0000015072" description="Junctional adhesion molecule C">
    <location>
        <begin position="30"/>
        <end position="310"/>
    </location>
</feature>
<feature type="chain" id="PRO_0000445337" description="Soluble form of JAM-C">
    <location>
        <begin position="31"/>
        <end status="unknown"/>
    </location>
</feature>
<feature type="topological domain" description="Extracellular" evidence="3">
    <location>
        <begin position="30"/>
        <end position="241"/>
    </location>
</feature>
<feature type="transmembrane region" description="Helical" evidence="3">
    <location>
        <begin position="242"/>
        <end position="262"/>
    </location>
</feature>
<feature type="topological domain" description="Cytoplasmic" evidence="3">
    <location>
        <begin position="263"/>
        <end position="310"/>
    </location>
</feature>
<feature type="domain" description="Ig-like V-type">
    <location>
        <begin position="35"/>
        <end position="127"/>
    </location>
</feature>
<feature type="domain" description="Ig-like C2-type">
    <location>
        <begin position="139"/>
        <end position="236"/>
    </location>
</feature>
<feature type="lipid moiety-binding region" description="S-palmitoyl cysteine" evidence="2">
    <location>
        <position position="264"/>
    </location>
</feature>
<feature type="lipid moiety-binding region" description="S-palmitoyl cysteine" evidence="2">
    <location>
        <position position="265"/>
    </location>
</feature>
<feature type="glycosylation site" description="N-linked (GlcNAc...) asparagine" evidence="3">
    <location>
        <position position="104"/>
    </location>
</feature>
<feature type="glycosylation site" description="N-linked (GlcNAc...) asparagine" evidence="11">
    <location>
        <position position="192"/>
    </location>
</feature>
<feature type="disulfide bond" evidence="4">
    <location>
        <begin position="53"/>
        <end position="115"/>
    </location>
</feature>
<feature type="disulfide bond" evidence="4">
    <location>
        <begin position="160"/>
        <end position="219"/>
    </location>
</feature>
<feature type="mutagenesis site" description="Decreased binding to JAM2." evidence="9">
    <original>E</original>
    <variation>R</variation>
    <location>
        <position position="66"/>
    </location>
</feature>
<feature type="sequence conflict" description="In Ref. 3; BAB25519." evidence="18" ref="3">
    <original>H</original>
    <variation>Q</variation>
    <location>
        <position position="44"/>
    </location>
</feature>
<feature type="sequence conflict" description="In Ref. 3; BAB25519." evidence="18" ref="3">
    <original>S</original>
    <variation>N</variation>
    <location>
        <position position="172"/>
    </location>
</feature>
<feature type="sequence conflict" description="In Ref. 3; BAB22715." evidence="18" ref="3">
    <original>R</original>
    <variation>K</variation>
    <location>
        <position position="303"/>
    </location>
</feature>
<feature type="sequence conflict" description="In Ref. 3; BAB22715." evidence="18" ref="3">
    <original>SS</original>
    <variation>IA</variation>
    <location>
        <begin position="306"/>
        <end position="307"/>
    </location>
</feature>
<feature type="strand" evidence="20">
    <location>
        <begin position="308"/>
        <end position="310"/>
    </location>
</feature>
<protein>
    <recommendedName>
        <fullName>Junctional adhesion molecule C</fullName>
        <shortName>JAM-C</shortName>
    </recommendedName>
    <alternativeName>
        <fullName evidence="15 16">JAM-2</fullName>
    </alternativeName>
    <alternativeName>
        <fullName>Junctional adhesion molecule 3</fullName>
        <shortName>JAM-3</shortName>
    </alternativeName>
    <component>
        <recommendedName>
            <fullName evidence="17">Soluble form of JAM-C</fullName>
            <shortName evidence="17">sJAM-C</shortName>
        </recommendedName>
    </component>
</protein>
<evidence type="ECO:0000250" key="1">
    <source>
        <dbReference type="UniProtKB" id="A3KPA0"/>
    </source>
</evidence>
<evidence type="ECO:0000250" key="2">
    <source>
        <dbReference type="UniProtKB" id="Q9BX67"/>
    </source>
</evidence>
<evidence type="ECO:0000255" key="3"/>
<evidence type="ECO:0000255" key="4">
    <source>
        <dbReference type="PROSITE-ProRule" id="PRU00114"/>
    </source>
</evidence>
<evidence type="ECO:0000269" key="5">
    <source>
    </source>
</evidence>
<evidence type="ECO:0000269" key="6">
    <source>
    </source>
</evidence>
<evidence type="ECO:0000269" key="7">
    <source>
    </source>
</evidence>
<evidence type="ECO:0000269" key="8">
    <source>
    </source>
</evidence>
<evidence type="ECO:0000269" key="9">
    <source>
    </source>
</evidence>
<evidence type="ECO:0000269" key="10">
    <source>
    </source>
</evidence>
<evidence type="ECO:0000269" key="11">
    <source>
    </source>
</evidence>
<evidence type="ECO:0000269" key="12">
    <source>
    </source>
</evidence>
<evidence type="ECO:0000269" key="13">
    <source>
    </source>
</evidence>
<evidence type="ECO:0000269" key="14">
    <source>
    </source>
</evidence>
<evidence type="ECO:0000303" key="15">
    <source>
    </source>
</evidence>
<evidence type="ECO:0000303" key="16">
    <source>
    </source>
</evidence>
<evidence type="ECO:0000303" key="17">
    <source>
    </source>
</evidence>
<evidence type="ECO:0000305" key="18"/>
<evidence type="ECO:0007744" key="19">
    <source>
        <dbReference type="PDB" id="5GMI"/>
    </source>
</evidence>
<evidence type="ECO:0007829" key="20">
    <source>
        <dbReference type="PDB" id="5GMI"/>
    </source>
</evidence>
<keyword id="KW-0002">3D-structure</keyword>
<keyword id="KW-0037">Angiogenesis</keyword>
<keyword id="KW-0130">Cell adhesion</keyword>
<keyword id="KW-0965">Cell junction</keyword>
<keyword id="KW-1003">Cell membrane</keyword>
<keyword id="KW-0221">Differentiation</keyword>
<keyword id="KW-0903">Direct protein sequencing</keyword>
<keyword id="KW-1015">Disulfide bond</keyword>
<keyword id="KW-0325">Glycoprotein</keyword>
<keyword id="KW-0393">Immunoglobulin domain</keyword>
<keyword id="KW-0449">Lipoprotein</keyword>
<keyword id="KW-0472">Membrane</keyword>
<keyword id="KW-0564">Palmitate</keyword>
<keyword id="KW-1185">Reference proteome</keyword>
<keyword id="KW-0964">Secreted</keyword>
<keyword id="KW-0732">Signal</keyword>
<keyword id="KW-0744">Spermatogenesis</keyword>
<keyword id="KW-0796">Tight junction</keyword>
<keyword id="KW-0812">Transmembrane</keyword>
<keyword id="KW-1133">Transmembrane helix</keyword>
<name>JAM3_MOUSE</name>
<dbReference type="EMBL" id="AJ300304">
    <property type="protein sequence ID" value="CAC20704.1"/>
    <property type="molecule type" value="mRNA"/>
</dbReference>
<dbReference type="EMBL" id="AK008187">
    <property type="protein sequence ID" value="BAB25519.1"/>
    <property type="molecule type" value="mRNA"/>
</dbReference>
<dbReference type="EMBL" id="AK003326">
    <property type="protein sequence ID" value="BAB22715.1"/>
    <property type="molecule type" value="mRNA"/>
</dbReference>
<dbReference type="EMBL" id="AK013156">
    <property type="protein sequence ID" value="BAB28683.1"/>
    <property type="molecule type" value="mRNA"/>
</dbReference>
<dbReference type="EMBL" id="AK017692">
    <property type="protein sequence ID" value="BAC25526.1"/>
    <property type="molecule type" value="mRNA"/>
</dbReference>
<dbReference type="EMBL" id="AK032833">
    <property type="protein sequence ID" value="BAC28049.1"/>
    <property type="molecule type" value="mRNA"/>
</dbReference>
<dbReference type="EMBL" id="BC024357">
    <property type="protein sequence ID" value="AAH24357.1"/>
    <property type="molecule type" value="mRNA"/>
</dbReference>
<dbReference type="CCDS" id="CCDS22939.1"/>
<dbReference type="RefSeq" id="NP_075766.1">
    <property type="nucleotide sequence ID" value="NM_023277.4"/>
</dbReference>
<dbReference type="PDB" id="5GMI">
    <property type="method" value="X-ray"/>
    <property type="resolution" value="2.71 A"/>
    <property type="chains" value="C/D=292-310"/>
</dbReference>
<dbReference type="PDBsum" id="5GMI"/>
<dbReference type="SMR" id="Q9D8B7"/>
<dbReference type="BioGRID" id="219990">
    <property type="interactions" value="1"/>
</dbReference>
<dbReference type="CORUM" id="Q9D8B7"/>
<dbReference type="DIP" id="DIP-42154N"/>
<dbReference type="FunCoup" id="Q9D8B7">
    <property type="interactions" value="412"/>
</dbReference>
<dbReference type="IntAct" id="Q9D8B7">
    <property type="interactions" value="1"/>
</dbReference>
<dbReference type="MINT" id="Q9D8B7"/>
<dbReference type="STRING" id="10090.ENSMUSP00000034472"/>
<dbReference type="GlyConnect" id="2448">
    <property type="glycosylation" value="4 N-Linked glycans (1 site)"/>
</dbReference>
<dbReference type="GlyCosmos" id="Q9D8B7">
    <property type="glycosylation" value="2 sites, 4 glycans"/>
</dbReference>
<dbReference type="GlyGen" id="Q9D8B7">
    <property type="glycosylation" value="2 sites, 6 N-linked glycans (2 sites)"/>
</dbReference>
<dbReference type="iPTMnet" id="Q9D8B7"/>
<dbReference type="PhosphoSitePlus" id="Q9D8B7"/>
<dbReference type="SwissPalm" id="Q9D8B7"/>
<dbReference type="PaxDb" id="10090-ENSMUSP00000034472"/>
<dbReference type="PeptideAtlas" id="Q9D8B7"/>
<dbReference type="ProteomicsDB" id="269359"/>
<dbReference type="Pumba" id="Q9D8B7"/>
<dbReference type="Antibodypedia" id="1117">
    <property type="antibodies" value="435 antibodies from 35 providers"/>
</dbReference>
<dbReference type="DNASU" id="83964"/>
<dbReference type="Ensembl" id="ENSMUST00000034472.16">
    <property type="protein sequence ID" value="ENSMUSP00000034472.9"/>
    <property type="gene ID" value="ENSMUSG00000031990.16"/>
</dbReference>
<dbReference type="GeneID" id="83964"/>
<dbReference type="KEGG" id="mmu:83964"/>
<dbReference type="UCSC" id="uc009oqj.2">
    <property type="organism name" value="mouse"/>
</dbReference>
<dbReference type="AGR" id="MGI:1933825"/>
<dbReference type="CTD" id="83700"/>
<dbReference type="MGI" id="MGI:1933825">
    <property type="gene designation" value="Jam3"/>
</dbReference>
<dbReference type="VEuPathDB" id="HostDB:ENSMUSG00000031990"/>
<dbReference type="eggNOG" id="ENOG502QTVP">
    <property type="taxonomic scope" value="Eukaryota"/>
</dbReference>
<dbReference type="GeneTree" id="ENSGT00940000156937"/>
<dbReference type="HOGENOM" id="CLU_067351_2_0_1"/>
<dbReference type="InParanoid" id="Q9D8B7"/>
<dbReference type="OMA" id="ELSCIIM"/>
<dbReference type="OrthoDB" id="9942446at2759"/>
<dbReference type="PhylomeDB" id="Q9D8B7"/>
<dbReference type="TreeFam" id="TF331459"/>
<dbReference type="Reactome" id="R-MMU-202733">
    <property type="pathway name" value="Cell surface interactions at the vascular wall"/>
</dbReference>
<dbReference type="Reactome" id="R-MMU-216083">
    <property type="pathway name" value="Integrin cell surface interactions"/>
</dbReference>
<dbReference type="BioGRID-ORCS" id="83964">
    <property type="hits" value="2 hits in 78 CRISPR screens"/>
</dbReference>
<dbReference type="ChiTaRS" id="Jam3">
    <property type="organism name" value="mouse"/>
</dbReference>
<dbReference type="PRO" id="PR:Q9D8B7"/>
<dbReference type="Proteomes" id="UP000000589">
    <property type="component" value="Chromosome 9"/>
</dbReference>
<dbReference type="RNAct" id="Q9D8B7">
    <property type="molecule type" value="protein"/>
</dbReference>
<dbReference type="Bgee" id="ENSMUSG00000031990">
    <property type="expression patterns" value="Expressed in ectoplacental cone and 253 other cell types or tissues"/>
</dbReference>
<dbReference type="GO" id="GO:0005923">
    <property type="term" value="C:bicellular tight junction"/>
    <property type="evidence" value="ECO:0000314"/>
    <property type="project" value="MGI"/>
</dbReference>
<dbReference type="GO" id="GO:0009986">
    <property type="term" value="C:cell surface"/>
    <property type="evidence" value="ECO:0000266"/>
    <property type="project" value="MGI"/>
</dbReference>
<dbReference type="GO" id="GO:0044291">
    <property type="term" value="C:cell-cell contact zone"/>
    <property type="evidence" value="ECO:0007669"/>
    <property type="project" value="Ensembl"/>
</dbReference>
<dbReference type="GO" id="GO:0005911">
    <property type="term" value="C:cell-cell junction"/>
    <property type="evidence" value="ECO:0000314"/>
    <property type="project" value="MGI"/>
</dbReference>
<dbReference type="GO" id="GO:0030057">
    <property type="term" value="C:desmosome"/>
    <property type="evidence" value="ECO:0000250"/>
    <property type="project" value="UniProtKB"/>
</dbReference>
<dbReference type="GO" id="GO:0005615">
    <property type="term" value="C:extracellular space"/>
    <property type="evidence" value="ECO:0000250"/>
    <property type="project" value="UniProtKB"/>
</dbReference>
<dbReference type="GO" id="GO:0031941">
    <property type="term" value="C:filamentous actin"/>
    <property type="evidence" value="ECO:0007669"/>
    <property type="project" value="Ensembl"/>
</dbReference>
<dbReference type="GO" id="GO:0005794">
    <property type="term" value="C:Golgi apparatus"/>
    <property type="evidence" value="ECO:0007669"/>
    <property type="project" value="Ensembl"/>
</dbReference>
<dbReference type="GO" id="GO:0005902">
    <property type="term" value="C:microvillus"/>
    <property type="evidence" value="ECO:0007669"/>
    <property type="project" value="Ensembl"/>
</dbReference>
<dbReference type="GO" id="GO:0033010">
    <property type="term" value="C:paranodal junction"/>
    <property type="evidence" value="ECO:0000314"/>
    <property type="project" value="MGI"/>
</dbReference>
<dbReference type="GO" id="GO:0005886">
    <property type="term" value="C:plasma membrane"/>
    <property type="evidence" value="ECO:0000250"/>
    <property type="project" value="UniProtKB"/>
</dbReference>
<dbReference type="GO" id="GO:0098636">
    <property type="term" value="C:protein complex involved in cell adhesion"/>
    <property type="evidence" value="ECO:0000250"/>
    <property type="project" value="UniProtKB"/>
</dbReference>
<dbReference type="GO" id="GO:0043220">
    <property type="term" value="C:Schmidt-Lanterman incisure"/>
    <property type="evidence" value="ECO:0000314"/>
    <property type="project" value="MGI"/>
</dbReference>
<dbReference type="GO" id="GO:0098632">
    <property type="term" value="F:cell-cell adhesion mediator activity"/>
    <property type="evidence" value="ECO:0007669"/>
    <property type="project" value="Ensembl"/>
</dbReference>
<dbReference type="GO" id="GO:0042802">
    <property type="term" value="F:identical protein binding"/>
    <property type="evidence" value="ECO:0000353"/>
    <property type="project" value="MGI"/>
</dbReference>
<dbReference type="GO" id="GO:0005178">
    <property type="term" value="F:integrin binding"/>
    <property type="evidence" value="ECO:0000353"/>
    <property type="project" value="MGI"/>
</dbReference>
<dbReference type="GO" id="GO:0046982">
    <property type="term" value="F:protein heterodimerization activity"/>
    <property type="evidence" value="ECO:0007669"/>
    <property type="project" value="InterPro"/>
</dbReference>
<dbReference type="GO" id="GO:0042803">
    <property type="term" value="F:protein homodimerization activity"/>
    <property type="evidence" value="ECO:0007669"/>
    <property type="project" value="InterPro"/>
</dbReference>
<dbReference type="GO" id="GO:0002250">
    <property type="term" value="P:adaptive immune response"/>
    <property type="evidence" value="ECO:0000315"/>
    <property type="project" value="MGI"/>
</dbReference>
<dbReference type="GO" id="GO:0034333">
    <property type="term" value="P:adherens junction assembly"/>
    <property type="evidence" value="ECO:0007669"/>
    <property type="project" value="Ensembl"/>
</dbReference>
<dbReference type="GO" id="GO:0001525">
    <property type="term" value="P:angiogenesis"/>
    <property type="evidence" value="ECO:0000314"/>
    <property type="project" value="UniProtKB"/>
</dbReference>
<dbReference type="GO" id="GO:0045176">
    <property type="term" value="P:apical protein localization"/>
    <property type="evidence" value="ECO:0007669"/>
    <property type="project" value="Ensembl"/>
</dbReference>
<dbReference type="GO" id="GO:0007155">
    <property type="term" value="P:cell adhesion"/>
    <property type="evidence" value="ECO:0000315"/>
    <property type="project" value="MGI"/>
</dbReference>
<dbReference type="GO" id="GO:0016477">
    <property type="term" value="P:cell migration"/>
    <property type="evidence" value="ECO:0000314"/>
    <property type="project" value="MGI"/>
</dbReference>
<dbReference type="GO" id="GO:0098609">
    <property type="term" value="P:cell-cell adhesion"/>
    <property type="evidence" value="ECO:0000315"/>
    <property type="project" value="UniProtKB"/>
</dbReference>
<dbReference type="GO" id="GO:0007160">
    <property type="term" value="P:cell-matrix adhesion"/>
    <property type="evidence" value="ECO:0000314"/>
    <property type="project" value="MGI"/>
</dbReference>
<dbReference type="GO" id="GO:0030010">
    <property type="term" value="P:establishment of cell polarity"/>
    <property type="evidence" value="ECO:0000314"/>
    <property type="project" value="MGI"/>
</dbReference>
<dbReference type="GO" id="GO:0097530">
    <property type="term" value="P:granulocyte migration"/>
    <property type="evidence" value="ECO:0007669"/>
    <property type="project" value="Ensembl"/>
</dbReference>
<dbReference type="GO" id="GO:0097241">
    <property type="term" value="P:hematopoietic stem cell migration to bone marrow"/>
    <property type="evidence" value="ECO:0000315"/>
    <property type="project" value="UniProtKB"/>
</dbReference>
<dbReference type="GO" id="GO:0034113">
    <property type="term" value="P:heterotypic cell-cell adhesion"/>
    <property type="evidence" value="ECO:0007669"/>
    <property type="project" value="Ensembl"/>
</dbReference>
<dbReference type="GO" id="GO:0002523">
    <property type="term" value="P:leukocyte migration involved in inflammatory response"/>
    <property type="evidence" value="ECO:0000315"/>
    <property type="project" value="MGI"/>
</dbReference>
<dbReference type="GO" id="GO:0042552">
    <property type="term" value="P:myelination"/>
    <property type="evidence" value="ECO:0000315"/>
    <property type="project" value="MGI"/>
</dbReference>
<dbReference type="GO" id="GO:0002318">
    <property type="term" value="P:myeloid progenitor cell differentiation"/>
    <property type="evidence" value="ECO:0000315"/>
    <property type="project" value="MGI"/>
</dbReference>
<dbReference type="GO" id="GO:0033629">
    <property type="term" value="P:negative regulation of cell adhesion mediated by integrin"/>
    <property type="evidence" value="ECO:0007669"/>
    <property type="project" value="Ensembl"/>
</dbReference>
<dbReference type="GO" id="GO:0033624">
    <property type="term" value="P:negative regulation of integrin activation"/>
    <property type="evidence" value="ECO:0007669"/>
    <property type="project" value="Ensembl"/>
</dbReference>
<dbReference type="GO" id="GO:0001780">
    <property type="term" value="P:neutrophil homeostasis"/>
    <property type="evidence" value="ECO:0000315"/>
    <property type="project" value="MGI"/>
</dbReference>
<dbReference type="GO" id="GO:1905710">
    <property type="term" value="P:positive regulation of membrane permeability"/>
    <property type="evidence" value="ECO:0007669"/>
    <property type="project" value="Ensembl"/>
</dbReference>
<dbReference type="GO" id="GO:2000439">
    <property type="term" value="P:positive regulation of monocyte extravasation"/>
    <property type="evidence" value="ECO:0007669"/>
    <property type="project" value="Ensembl"/>
</dbReference>
<dbReference type="GO" id="GO:1902414">
    <property type="term" value="P:protein localization to cell junction"/>
    <property type="evidence" value="ECO:0007669"/>
    <property type="project" value="Ensembl"/>
</dbReference>
<dbReference type="GO" id="GO:0034394">
    <property type="term" value="P:protein localization to cell surface"/>
    <property type="evidence" value="ECO:0007669"/>
    <property type="project" value="Ensembl"/>
</dbReference>
<dbReference type="GO" id="GO:0090138">
    <property type="term" value="P:regulation of actin cytoskeleton organization by cell-cell adhesion"/>
    <property type="evidence" value="ECO:0000315"/>
    <property type="project" value="MGI"/>
</dbReference>
<dbReference type="GO" id="GO:0090022">
    <property type="term" value="P:regulation of neutrophil chemotaxis"/>
    <property type="evidence" value="ECO:0000250"/>
    <property type="project" value="UniProtKB"/>
</dbReference>
<dbReference type="GO" id="GO:0007286">
    <property type="term" value="P:spermatid development"/>
    <property type="evidence" value="ECO:0000315"/>
    <property type="project" value="MGI"/>
</dbReference>
<dbReference type="GO" id="GO:0007283">
    <property type="term" value="P:spermatogenesis"/>
    <property type="evidence" value="ECO:0000315"/>
    <property type="project" value="MGI"/>
</dbReference>
<dbReference type="GO" id="GO:0019226">
    <property type="term" value="P:transmission of nerve impulse"/>
    <property type="evidence" value="ECO:0000315"/>
    <property type="project" value="MGI"/>
</dbReference>
<dbReference type="FunFam" id="2.60.40.10:FF:000342">
    <property type="entry name" value="Junctional adhesion molecule A"/>
    <property type="match status" value="1"/>
</dbReference>
<dbReference type="FunFam" id="2.60.40.10:FF:000766">
    <property type="entry name" value="junctional adhesion molecule C"/>
    <property type="match status" value="1"/>
</dbReference>
<dbReference type="Gene3D" id="2.60.40.10">
    <property type="entry name" value="Immunoglobulins"/>
    <property type="match status" value="2"/>
</dbReference>
<dbReference type="InterPro" id="IPR007110">
    <property type="entry name" value="Ig-like_dom"/>
</dbReference>
<dbReference type="InterPro" id="IPR036179">
    <property type="entry name" value="Ig-like_dom_sf"/>
</dbReference>
<dbReference type="InterPro" id="IPR013783">
    <property type="entry name" value="Ig-like_fold"/>
</dbReference>
<dbReference type="InterPro" id="IPR003599">
    <property type="entry name" value="Ig_sub"/>
</dbReference>
<dbReference type="InterPro" id="IPR003598">
    <property type="entry name" value="Ig_sub2"/>
</dbReference>
<dbReference type="InterPro" id="IPR013106">
    <property type="entry name" value="Ig_V-set"/>
</dbReference>
<dbReference type="InterPro" id="IPR042974">
    <property type="entry name" value="JAM-C"/>
</dbReference>
<dbReference type="PANTHER" id="PTHR44598">
    <property type="entry name" value="JUNCTIONAL ADHESION MOLECULE C"/>
    <property type="match status" value="1"/>
</dbReference>
<dbReference type="PANTHER" id="PTHR44598:SF2">
    <property type="entry name" value="JUNCTIONAL ADHESION MOLECULE C"/>
    <property type="match status" value="1"/>
</dbReference>
<dbReference type="Pfam" id="PF13927">
    <property type="entry name" value="Ig_3"/>
    <property type="match status" value="1"/>
</dbReference>
<dbReference type="Pfam" id="PF07686">
    <property type="entry name" value="V-set"/>
    <property type="match status" value="1"/>
</dbReference>
<dbReference type="SMART" id="SM00409">
    <property type="entry name" value="IG"/>
    <property type="match status" value="2"/>
</dbReference>
<dbReference type="SMART" id="SM00408">
    <property type="entry name" value="IGc2"/>
    <property type="match status" value="2"/>
</dbReference>
<dbReference type="SMART" id="SM00406">
    <property type="entry name" value="IGv"/>
    <property type="match status" value="1"/>
</dbReference>
<dbReference type="SUPFAM" id="SSF48726">
    <property type="entry name" value="Immunoglobulin"/>
    <property type="match status" value="2"/>
</dbReference>
<dbReference type="PROSITE" id="PS50835">
    <property type="entry name" value="IG_LIKE"/>
    <property type="match status" value="2"/>
</dbReference>
<proteinExistence type="evidence at protein level"/>
<accession>Q9D8B7</accession>
<accession>Q8BT59</accession>
<accession>Q9D1M9</accession>
<accession>Q9EPK4</accession>
<comment type="function">
    <text evidence="1 2 7 8 9 10 13">Junctional adhesion protein that mediates heterotypic cell-cell interactions with its cognate receptor JAM2 to regulate different cellular processes (PubMed:15372036, PubMed:16093349). Plays a role in homing and mobilization of hematopoietic stem and progenitor cells within the bone marrow. At the surface of bone marrow stromal cells, it contributes to the retention of the hematopoietic stem and progenitor cells expressing JAM3 (PubMed:24357068). Plays a central role in leukocytes extravasation by facilitating transmigration through the endothelium (PubMed:16297198). Plays a role in spermatogenesis where JAM2 and JAM3, which are respectively expressed by Sertoli and germ cells, mediate an interaction between both cell types and play an essential role in the anchorage of germ cells onto Sertoli cells and the assembly of cell polarity complexes during spermatid differentiation (PubMed:15372036, PubMed:15994945). Also functions as a counter-receptor for ITGAM, mediating leukocyte-platelet interactions and is involved in the regulation of transepithelial migration of polymorphonuclear neutrophils (PMN) (PubMed:16093349). Plays a role in angiogenesis (PubMed:15994945). Plays a role in the regulation of cell migration (By similarity). During myogenesis, it is involved in myocyte fusion (By similarity).</text>
</comment>
<comment type="function">
    <molecule>Soluble form of JAM-C</molecule>
    <text evidence="12">Promotes chemotaxis of vascular endothelial cells and stimulates angiogenesis.</text>
</comment>
<comment type="subunit">
    <text evidence="2 14">Interacts with ITGAM (By similarity). Interacts with GORASP2 (PubMed:28617811).</text>
</comment>
<comment type="subcellular location">
    <subcellularLocation>
        <location evidence="5 6 9">Cell membrane</location>
        <topology evidence="2">Single-pass type I membrane protein</topology>
    </subcellularLocation>
    <subcellularLocation>
        <location evidence="5 9">Cell junction</location>
    </subcellularLocation>
    <subcellularLocation>
        <location evidence="2">Cell junction</location>
        <location evidence="2">Desmosome</location>
    </subcellularLocation>
    <subcellularLocation>
        <location evidence="5 6">Cell junction</location>
        <location evidence="5 6">Tight junction</location>
    </subcellularLocation>
    <text evidence="2 14">Detected in the acrosome region in developing spermatids (PubMed:28617811). In epithelial cells, it is expressed at desmosomes but not at tight junctions (By similarity). Localizes at the cell surface of endothelial cells; treatment of endothelial cells with vascular endothelial growth factor stimulates recruitment of JAM3 to cell-cell contacts (By similarity).</text>
</comment>
<comment type="subcellular location">
    <molecule>Soluble form of JAM-C</molecule>
    <subcellularLocation>
        <location evidence="2">Secreted</location>
    </subcellularLocation>
</comment>
<comment type="tissue specificity">
    <text evidence="5 6 7 14">Colocalizes with Jam2 near the lumen of seminiferous tubulues. Detected at junctional plaques that correspond to cell-cell contacts between spermatids and Sertoli cells (PubMed:15372036, PubMed:28617811). Detected on endothelial cells, in brain vessels and kidney glomeruli (at protein level) (PubMed:11053409, PubMed:11739175). Detected in heart, lung, liver, kidney, testis, thymus, lymph node and Peyer patch (PubMed:11053409, PubMed:11739175). Endothelial cells (PubMed:11739175).</text>
</comment>
<comment type="developmental stage">
    <text evidence="7 14">Detected in diploid pre-meiotic spermatocytes, haploid spermatids and elongated spermatids (PubMed:15372036, PubMed:28617811). Restricted to junctional plaques in the heads of elongated spermatids (at protein level) (PubMed:15372036).</text>
</comment>
<comment type="domain">
    <text evidence="9">The Ig-like V-type domain mediates interaction with JAM2.</text>
</comment>
<comment type="PTM">
    <text evidence="2">Proteolytically cleaved from endothelial cells surface into a soluble form by ADAM10 and ADAM17; the release of soluble JAM3 is increased by pro-inflammatory factors.</text>
</comment>
<comment type="PTM">
    <text evidence="5">N-glycosylated.</text>
</comment>
<comment type="PTM">
    <text evidence="2">S-palmitoylated by ZDHHC7. S-palmitoylation promotes expression at tight junctions.</text>
</comment>
<comment type="disruption phenotype">
    <text evidence="7">Important mortality during the postnatal period; about 40% of the mutant mice survive. Mutant males are infertile; they have strongly reduced testis size and fail to produce mature sperm cells. Developing spermatids fail to become polarized, and do not form acrosomes.</text>
</comment>
<comment type="similarity">
    <text evidence="18">Belongs to the immunoglobulin superfamily.</text>
</comment>
<reference key="1">
    <citation type="journal article" date="2000" name="Curr. Top. Microbiol. Immunol.">
        <title>Cloning of JAM-2 and JAM-3: an emerging junctional adhesion molecular family?</title>
        <authorList>
            <person name="Aurrand-Lions M.A."/>
            <person name="Duncan L."/>
            <person name="Du Pasquier L."/>
            <person name="Imhof B.A."/>
        </authorList>
    </citation>
    <scope>NUCLEOTIDE SEQUENCE [MRNA]</scope>
</reference>
<reference key="2">
    <citation type="journal article" date="2001" name="J. Biol. Chem.">
        <title>JAM-2, a novel immunoglobulin superfamily molecule, expressed by endothelial and lymphatic cells.</title>
        <authorList>
            <person name="Aurrand-Lions M.A."/>
            <person name="Duncan L."/>
            <person name="Ballestrem C."/>
            <person name="Imhof B.A."/>
        </authorList>
    </citation>
    <scope>NUCLEOTIDE SEQUENCE [MRNA]</scope>
    <scope>SUBCELLULAR LOCATION</scope>
    <scope>TISSUE SPECIFICITY</scope>
</reference>
<reference key="3">
    <citation type="journal article" date="2005" name="Science">
        <title>The transcriptional landscape of the mammalian genome.</title>
        <authorList>
            <person name="Carninci P."/>
            <person name="Kasukawa T."/>
            <person name="Katayama S."/>
            <person name="Gough J."/>
            <person name="Frith M.C."/>
            <person name="Maeda N."/>
            <person name="Oyama R."/>
            <person name="Ravasi T."/>
            <person name="Lenhard B."/>
            <person name="Wells C."/>
            <person name="Kodzius R."/>
            <person name="Shimokawa K."/>
            <person name="Bajic V.B."/>
            <person name="Brenner S.E."/>
            <person name="Batalov S."/>
            <person name="Forrest A.R."/>
            <person name="Zavolan M."/>
            <person name="Davis M.J."/>
            <person name="Wilming L.G."/>
            <person name="Aidinis V."/>
            <person name="Allen J.E."/>
            <person name="Ambesi-Impiombato A."/>
            <person name="Apweiler R."/>
            <person name="Aturaliya R.N."/>
            <person name="Bailey T.L."/>
            <person name="Bansal M."/>
            <person name="Baxter L."/>
            <person name="Beisel K.W."/>
            <person name="Bersano T."/>
            <person name="Bono H."/>
            <person name="Chalk A.M."/>
            <person name="Chiu K.P."/>
            <person name="Choudhary V."/>
            <person name="Christoffels A."/>
            <person name="Clutterbuck D.R."/>
            <person name="Crowe M.L."/>
            <person name="Dalla E."/>
            <person name="Dalrymple B.P."/>
            <person name="de Bono B."/>
            <person name="Della Gatta G."/>
            <person name="di Bernardo D."/>
            <person name="Down T."/>
            <person name="Engstrom P."/>
            <person name="Fagiolini M."/>
            <person name="Faulkner G."/>
            <person name="Fletcher C.F."/>
            <person name="Fukushima T."/>
            <person name="Furuno M."/>
            <person name="Futaki S."/>
            <person name="Gariboldi M."/>
            <person name="Georgii-Hemming P."/>
            <person name="Gingeras T.R."/>
            <person name="Gojobori T."/>
            <person name="Green R.E."/>
            <person name="Gustincich S."/>
            <person name="Harbers M."/>
            <person name="Hayashi Y."/>
            <person name="Hensch T.K."/>
            <person name="Hirokawa N."/>
            <person name="Hill D."/>
            <person name="Huminiecki L."/>
            <person name="Iacono M."/>
            <person name="Ikeo K."/>
            <person name="Iwama A."/>
            <person name="Ishikawa T."/>
            <person name="Jakt M."/>
            <person name="Kanapin A."/>
            <person name="Katoh M."/>
            <person name="Kawasawa Y."/>
            <person name="Kelso J."/>
            <person name="Kitamura H."/>
            <person name="Kitano H."/>
            <person name="Kollias G."/>
            <person name="Krishnan S.P."/>
            <person name="Kruger A."/>
            <person name="Kummerfeld S.K."/>
            <person name="Kurochkin I.V."/>
            <person name="Lareau L.F."/>
            <person name="Lazarevic D."/>
            <person name="Lipovich L."/>
            <person name="Liu J."/>
            <person name="Liuni S."/>
            <person name="McWilliam S."/>
            <person name="Madan Babu M."/>
            <person name="Madera M."/>
            <person name="Marchionni L."/>
            <person name="Matsuda H."/>
            <person name="Matsuzawa S."/>
            <person name="Miki H."/>
            <person name="Mignone F."/>
            <person name="Miyake S."/>
            <person name="Morris K."/>
            <person name="Mottagui-Tabar S."/>
            <person name="Mulder N."/>
            <person name="Nakano N."/>
            <person name="Nakauchi H."/>
            <person name="Ng P."/>
            <person name="Nilsson R."/>
            <person name="Nishiguchi S."/>
            <person name="Nishikawa S."/>
            <person name="Nori F."/>
            <person name="Ohara O."/>
            <person name="Okazaki Y."/>
            <person name="Orlando V."/>
            <person name="Pang K.C."/>
            <person name="Pavan W.J."/>
            <person name="Pavesi G."/>
            <person name="Pesole G."/>
            <person name="Petrovsky N."/>
            <person name="Piazza S."/>
            <person name="Reed J."/>
            <person name="Reid J.F."/>
            <person name="Ring B.Z."/>
            <person name="Ringwald M."/>
            <person name="Rost B."/>
            <person name="Ruan Y."/>
            <person name="Salzberg S.L."/>
            <person name="Sandelin A."/>
            <person name="Schneider C."/>
            <person name="Schoenbach C."/>
            <person name="Sekiguchi K."/>
            <person name="Semple C.A."/>
            <person name="Seno S."/>
            <person name="Sessa L."/>
            <person name="Sheng Y."/>
            <person name="Shibata Y."/>
            <person name="Shimada H."/>
            <person name="Shimada K."/>
            <person name="Silva D."/>
            <person name="Sinclair B."/>
            <person name="Sperling S."/>
            <person name="Stupka E."/>
            <person name="Sugiura K."/>
            <person name="Sultana R."/>
            <person name="Takenaka Y."/>
            <person name="Taki K."/>
            <person name="Tammoja K."/>
            <person name="Tan S.L."/>
            <person name="Tang S."/>
            <person name="Taylor M.S."/>
            <person name="Tegner J."/>
            <person name="Teichmann S.A."/>
            <person name="Ueda H.R."/>
            <person name="van Nimwegen E."/>
            <person name="Verardo R."/>
            <person name="Wei C.L."/>
            <person name="Yagi K."/>
            <person name="Yamanishi H."/>
            <person name="Zabarovsky E."/>
            <person name="Zhu S."/>
            <person name="Zimmer A."/>
            <person name="Hide W."/>
            <person name="Bult C."/>
            <person name="Grimmond S.M."/>
            <person name="Teasdale R.D."/>
            <person name="Liu E.T."/>
            <person name="Brusic V."/>
            <person name="Quackenbush J."/>
            <person name="Wahlestedt C."/>
            <person name="Mattick J.S."/>
            <person name="Hume D.A."/>
            <person name="Kai C."/>
            <person name="Sasaki D."/>
            <person name="Tomaru Y."/>
            <person name="Fukuda S."/>
            <person name="Kanamori-Katayama M."/>
            <person name="Suzuki M."/>
            <person name="Aoki J."/>
            <person name="Arakawa T."/>
            <person name="Iida J."/>
            <person name="Imamura K."/>
            <person name="Itoh M."/>
            <person name="Kato T."/>
            <person name="Kawaji H."/>
            <person name="Kawagashira N."/>
            <person name="Kawashima T."/>
            <person name="Kojima M."/>
            <person name="Kondo S."/>
            <person name="Konno H."/>
            <person name="Nakano K."/>
            <person name="Ninomiya N."/>
            <person name="Nishio T."/>
            <person name="Okada M."/>
            <person name="Plessy C."/>
            <person name="Shibata K."/>
            <person name="Shiraki T."/>
            <person name="Suzuki S."/>
            <person name="Tagami M."/>
            <person name="Waki K."/>
            <person name="Watahiki A."/>
            <person name="Okamura-Oho Y."/>
            <person name="Suzuki H."/>
            <person name="Kawai J."/>
            <person name="Hayashizaki Y."/>
        </authorList>
    </citation>
    <scope>NUCLEOTIDE SEQUENCE [LARGE SCALE MRNA]</scope>
    <source>
        <strain>C57BL/6J</strain>
        <tissue>Embryo</tissue>
        <tissue>Small intestine</tissue>
        <tissue>Wolffian duct</tissue>
    </source>
</reference>
<reference key="4">
    <citation type="journal article" date="2004" name="Genome Res.">
        <title>The status, quality, and expansion of the NIH full-length cDNA project: the Mammalian Gene Collection (MGC).</title>
        <authorList>
            <consortium name="The MGC Project Team"/>
        </authorList>
    </citation>
    <scope>NUCLEOTIDE SEQUENCE [LARGE SCALE MRNA]</scope>
    <source>
        <strain>FVB/N</strain>
        <tissue>Kidney</tissue>
    </source>
</reference>
<reference key="5">
    <citation type="submission" date="2007-04" db="UniProtKB">
        <authorList>
            <person name="Lubec G."/>
            <person name="Kang S.U."/>
        </authorList>
    </citation>
    <scope>PROTEIN SEQUENCE OF 84-91 AND 146-154</scope>
    <scope>IDENTIFICATION BY MASS SPECTROMETRY</scope>
    <source>
        <strain>C57BL/6J</strain>
        <tissue>Brain</tissue>
    </source>
</reference>
<reference key="6">
    <citation type="journal article" date="2001" name="Blood">
        <title>Heterogeneity of endothelial junctions is reflected by differential expression and specific subcellular localization of the three JAM family members.</title>
        <authorList>
            <person name="Aurrand-Lions M.A."/>
            <person name="Johnson-Leger C."/>
            <person name="Wong C."/>
            <person name="Du Pasquier L."/>
            <person name="Imhof B.A."/>
        </authorList>
    </citation>
    <scope>SUBCELLULAR LOCATION</scope>
    <scope>TISSUE SPECIFICITY</scope>
</reference>
<reference key="7">
    <citation type="journal article" date="2003" name="Trends Immunol.">
        <title>Leukocyte-endothelial-cell interactions in leukocyte transmigration and the inflammatory response.</title>
        <authorList>
            <person name="Muller W.A."/>
        </authorList>
    </citation>
    <scope>REVIEW</scope>
    <scope>NOMENCLATURE</scope>
</reference>
<reference key="8">
    <citation type="journal article" date="2004" name="Nature">
        <title>Spermatid differentiation requires the assembly of a cell polarity complex downstream of junctional adhesion molecule-C.</title>
        <authorList>
            <person name="Gliki G."/>
            <person name="Ebnet K."/>
            <person name="Aurrand-Lions M."/>
            <person name="Imhof B.A."/>
            <person name="Adams R.H."/>
        </authorList>
    </citation>
    <scope>FUNCTION</scope>
    <scope>TISSUE SPECIFICITY</scope>
    <scope>DEVELOPMENTAL STAGE</scope>
    <scope>DISRUPTION PHENOTYPE</scope>
</reference>
<reference key="9">
    <citation type="journal article" date="2005" name="J. Invest. Dermatol.">
        <title>Junctional adhesion molecules (JAM)-B and -C contribute to leukocyte extravasation to the skin and mediate cutaneous inflammation.</title>
        <authorList>
            <person name="Ludwig R.J."/>
            <person name="Zollner T.M."/>
            <person name="Santoso S."/>
            <person name="Hardt K."/>
            <person name="Gille J."/>
            <person name="Baatz H."/>
            <person name="Johann P.S."/>
            <person name="Pfeffer J."/>
            <person name="Radeke H.H."/>
            <person name="Schoen M.P."/>
            <person name="Kaufmann R."/>
            <person name="Boehncke W.H."/>
            <person name="Podda M."/>
        </authorList>
    </citation>
    <scope>FUNCTION</scope>
</reference>
<reference key="10">
    <citation type="journal article" date="2005" name="Cancer Res.">
        <title>Antibody against junctional adhesion molecule-C inhibits angiogenesis and tumor growth.</title>
        <authorList>
            <person name="Lamagna C."/>
            <person name="Hodivala-Dilke K.M."/>
            <person name="Imhof B.A."/>
            <person name="Aurrand-Lions M."/>
        </authorList>
    </citation>
    <scope>FUNCTION IN ANGIOGENESIS</scope>
</reference>
<reference key="11">
    <citation type="journal article" date="2005" name="Mol. Biol. Cell">
        <title>Dual interaction of JAM-C with JAM-B and alpha(M)beta2 integrin: function in junctional complexes and leukocyte adhesion.</title>
        <authorList>
            <person name="Lamagna C."/>
            <person name="Meda P."/>
            <person name="Mandicourt G."/>
            <person name="Brown J."/>
            <person name="Gilbert R.J."/>
            <person name="Jones E.Y."/>
            <person name="Kiefer F."/>
            <person name="Ruga P."/>
            <person name="Imhof B.A."/>
            <person name="Aurrand-Lions M."/>
        </authorList>
    </citation>
    <scope>FUNCTION</scope>
    <scope>SUBCELLULAR LOCATION</scope>
    <scope>DOMAIN</scope>
    <scope>MUTAGENESIS OF GLU-66</scope>
</reference>
<reference key="12">
    <citation type="journal article" date="2009" name="Mol. Cell. Proteomics">
        <title>The mouse C2C12 myoblast cell surface N-linked glycoproteome: identification, glycosite occupancy, and membrane orientation.</title>
        <authorList>
            <person name="Gundry R.L."/>
            <person name="Raginski K."/>
            <person name="Tarasova Y."/>
            <person name="Tchernyshyov I."/>
            <person name="Bausch-Fluck D."/>
            <person name="Elliott S.T."/>
            <person name="Boheler K.R."/>
            <person name="Van Eyk J.E."/>
            <person name="Wollscheid B."/>
        </authorList>
    </citation>
    <scope>GLYCOSYLATION [LARGE SCALE ANALYSIS] AT ASN-192</scope>
    <source>
        <tissue>Myoblast</tissue>
    </source>
</reference>
<reference key="13">
    <citation type="journal article" date="2010" name="Cell">
        <title>A tissue-specific atlas of mouse protein phosphorylation and expression.</title>
        <authorList>
            <person name="Huttlin E.L."/>
            <person name="Jedrychowski M.P."/>
            <person name="Elias J.E."/>
            <person name="Goswami T."/>
            <person name="Rad R."/>
            <person name="Beausoleil S.A."/>
            <person name="Villen J."/>
            <person name="Haas W."/>
            <person name="Sowa M.E."/>
            <person name="Gygi S.P."/>
        </authorList>
    </citation>
    <scope>IDENTIFICATION BY MASS SPECTROMETRY [LARGE SCALE ANALYSIS]</scope>
    <source>
        <tissue>Brain</tissue>
        <tissue>Lung</tissue>
        <tissue>Testis</tissue>
    </source>
</reference>
<reference key="14">
    <citation type="journal article" date="2010" name="J. Immunol.">
        <title>Junctional adhesion molecule-C is a soluble mediator of angiogenesis.</title>
        <authorList>
            <person name="Rabquer B.J."/>
            <person name="Amin M.A."/>
            <person name="Teegala N."/>
            <person name="Shaheen M.K."/>
            <person name="Tsou P.S."/>
            <person name="Ruth J.H."/>
            <person name="Lesch C.A."/>
            <person name="Imhof B.A."/>
            <person name="Koch A.E."/>
        </authorList>
    </citation>
    <scope>FUNCTION IN ANGIOGENESIS (SOLUBLE FORM OF JAM-C)</scope>
</reference>
<reference key="15">
    <citation type="journal article" date="2014" name="Stem Cells">
        <title>Function of Jam-B/Jam-C interaction in homing and mobilization of human and mouse hematopoietic stem and progenitor cells.</title>
        <authorList>
            <person name="Arcangeli M.L."/>
            <person name="Bardin F."/>
            <person name="Frontera V."/>
            <person name="Bidaut G."/>
            <person name="Obrados E."/>
            <person name="Adams R.H."/>
            <person name="Chabannon C."/>
            <person name="Aurrand-Lions M."/>
        </authorList>
    </citation>
    <scope>FUNCTION</scope>
</reference>
<reference evidence="19" key="16">
    <citation type="journal article" date="2017" name="PLoS Genet.">
        <title>Genetic, structural, and chemical insights into the dual function of GRASP55 in germ cell Golgi remodeling and JAM-C polarized localization during spermatogenesis.</title>
        <authorList>
            <person name="Cartier-Michaud A."/>
            <person name="Bailly A.L."/>
            <person name="Betzi S."/>
            <person name="Shi X."/>
            <person name="Lissitzky J.C."/>
            <person name="Zarubica A."/>
            <person name="Serge A."/>
            <person name="Roche P."/>
            <person name="Lugari A."/>
            <person name="Hamon V."/>
            <person name="Bardin F."/>
            <person name="Derviaux C."/>
            <person name="Lembo F."/>
            <person name="Audebert S."/>
            <person name="Marchetto S."/>
            <person name="Durand B."/>
            <person name="Borg J.P."/>
            <person name="Shi N."/>
            <person name="Morelli X."/>
            <person name="Aurrand-Lions M."/>
        </authorList>
    </citation>
    <scope>X-RAY CRYSTALLOGRAPHY (2.71 ANGSTROMS) OF 292-310 IN COMPLEX WITH GORASP2</scope>
    <scope>INTERACTION WITH GORASP2</scope>
    <scope>SUBCELLULAR LOCATION</scope>
    <scope>TISSUE SPECIFICITY</scope>
    <scope>DEVELOPMENTAL STAGE</scope>
</reference>
<gene>
    <name type="primary">Jam3</name>
</gene>
<sequence>MALSRRLRLRLYARLPDFFLLLLFRGCMIEAVNLKSSNRNPVVHEFESVELSCIITDSQTSDPRIEWKKIQDGQTTYVYFDNKIQGDLAGRTDVFGKTSLRIWNVTRSDSAIYRCEVVALNDRKEVDEITIELIVQVKPVTPVCRIPAAVPVGKTATLQCQESEGYPRPHYSWYRNDVPLPTDSRANPRFQNSSFHVNSETGTLVFNAVHKDDSGQYYCIASNDAGAARCEGQDMEVYDLNIAGIIGGVLVVLIVLAVITMGICCAYRRGCFISSKQDGESYKSPGKHDGVNYIRTSEEGDFRHKSSFVI</sequence>
<organism>
    <name type="scientific">Mus musculus</name>
    <name type="common">Mouse</name>
    <dbReference type="NCBI Taxonomy" id="10090"/>
    <lineage>
        <taxon>Eukaryota</taxon>
        <taxon>Metazoa</taxon>
        <taxon>Chordata</taxon>
        <taxon>Craniata</taxon>
        <taxon>Vertebrata</taxon>
        <taxon>Euteleostomi</taxon>
        <taxon>Mammalia</taxon>
        <taxon>Eutheria</taxon>
        <taxon>Euarchontoglires</taxon>
        <taxon>Glires</taxon>
        <taxon>Rodentia</taxon>
        <taxon>Myomorpha</taxon>
        <taxon>Muroidea</taxon>
        <taxon>Muridae</taxon>
        <taxon>Murinae</taxon>
        <taxon>Mus</taxon>
        <taxon>Mus</taxon>
    </lineage>
</organism>